<dbReference type="EMBL" id="M17449">
    <property type="protein sequence ID" value="AAA44852.1"/>
    <property type="molecule type" value="Genomic_RNA"/>
</dbReference>
<dbReference type="Proteomes" id="UP000007697">
    <property type="component" value="Genome"/>
</dbReference>
<dbReference type="GO" id="GO:0030430">
    <property type="term" value="C:host cell cytoplasm"/>
    <property type="evidence" value="ECO:0007669"/>
    <property type="project" value="UniProtKB-SubCell"/>
</dbReference>
<dbReference type="GO" id="GO:0044196">
    <property type="term" value="C:host cell nucleolus"/>
    <property type="evidence" value="ECO:0007669"/>
    <property type="project" value="UniProtKB-SubCell"/>
</dbReference>
<dbReference type="GO" id="GO:0003700">
    <property type="term" value="F:DNA-binding transcription factor activity"/>
    <property type="evidence" value="ECO:0007669"/>
    <property type="project" value="UniProtKB-UniRule"/>
</dbReference>
<dbReference type="GO" id="GO:0003723">
    <property type="term" value="F:RNA binding"/>
    <property type="evidence" value="ECO:0007669"/>
    <property type="project" value="UniProtKB-UniRule"/>
</dbReference>
<dbReference type="GO" id="GO:0051028">
    <property type="term" value="P:mRNA transport"/>
    <property type="evidence" value="ECO:0007669"/>
    <property type="project" value="UniProtKB-UniRule"/>
</dbReference>
<dbReference type="GO" id="GO:0016032">
    <property type="term" value="P:viral process"/>
    <property type="evidence" value="ECO:0007669"/>
    <property type="project" value="UniProtKB-UniRule"/>
</dbReference>
<dbReference type="Gene3D" id="6.10.140.630">
    <property type="match status" value="1"/>
</dbReference>
<dbReference type="HAMAP" id="MF_04077">
    <property type="entry name" value="REV_HIV1"/>
    <property type="match status" value="1"/>
</dbReference>
<dbReference type="InterPro" id="IPR000625">
    <property type="entry name" value="REV_protein"/>
</dbReference>
<dbReference type="Pfam" id="PF00424">
    <property type="entry name" value="REV"/>
    <property type="match status" value="1"/>
</dbReference>
<keyword id="KW-0014">AIDS</keyword>
<keyword id="KW-1035">Host cytoplasm</keyword>
<keyword id="KW-1048">Host nucleus</keyword>
<keyword id="KW-0945">Host-virus interaction</keyword>
<keyword id="KW-0488">Methylation</keyword>
<keyword id="KW-0509">mRNA transport</keyword>
<keyword id="KW-0597">Phosphoprotein</keyword>
<keyword id="KW-1185">Reference proteome</keyword>
<keyword id="KW-0694">RNA-binding</keyword>
<keyword id="KW-0813">Transport</keyword>
<reference key="1">
    <citation type="journal article" date="1988" name="Virology">
        <title>Envelope sequences of two new United States HIV-1 isolates.</title>
        <authorList>
            <person name="Gurgo C."/>
            <person name="Guo H.-G."/>
            <person name="Franchini G."/>
            <person name="Aldovini A."/>
            <person name="Collalti E."/>
            <person name="Farrell K."/>
            <person name="Wong-Staal F."/>
            <person name="Gallo R.C."/>
            <person name="Reitz M.S. Jr."/>
        </authorList>
    </citation>
    <scope>NUCLEOTIDE SEQUENCE [GENOMIC RNA]</scope>
</reference>
<reference key="2">
    <citation type="journal article" date="1999" name="Arch. Biochem. Biophys.">
        <title>The ins and outs of HIV Rev.</title>
        <authorList>
            <person name="Hope T.J."/>
        </authorList>
    </citation>
    <scope>REVIEW</scope>
</reference>
<sequence length="115" mass="12956">MAGRSGDSDEELLKTVRLIKFLYQSNPPPSSEGTRQARRNRRRRWRERQRHIRSISAWILSNYLGRPAEPVPLQLPPQRLTLDCSEDCGTSGTQGVGSPQILVESPTVLESGTKE</sequence>
<proteinExistence type="inferred from homology"/>
<feature type="chain" id="PRO_0000085271" description="Protein Rev">
    <location>
        <begin position="1"/>
        <end position="115"/>
    </location>
</feature>
<feature type="region of interest" description="Homomultimerization" evidence="1">
    <location>
        <begin position="18"/>
        <end position="26"/>
    </location>
</feature>
<feature type="region of interest" description="Disordered" evidence="2">
    <location>
        <begin position="23"/>
        <end position="48"/>
    </location>
</feature>
<feature type="region of interest" description="Disordered" evidence="2">
    <location>
        <begin position="89"/>
        <end position="115"/>
    </location>
</feature>
<feature type="short sequence motif" description="Nuclear localization signal and RNA-binding (RRE)" evidence="1">
    <location>
        <begin position="34"/>
        <end position="50"/>
    </location>
</feature>
<feature type="short sequence motif" description="Nuclear export signal and binding to XPO1" evidence="1">
    <location>
        <begin position="73"/>
        <end position="83"/>
    </location>
</feature>
<feature type="compositionally biased region" description="Basic residues" evidence="2">
    <location>
        <begin position="36"/>
        <end position="48"/>
    </location>
</feature>
<feature type="modified residue" description="Phosphoserine; by host CK2" evidence="1">
    <location>
        <position position="5"/>
    </location>
</feature>
<feature type="modified residue" description="Phosphoserine; by host CK2" evidence="1">
    <location>
        <position position="8"/>
    </location>
</feature>
<feature type="modified residue" description="Phosphoserine; by host" evidence="1">
    <location>
        <position position="91"/>
    </location>
</feature>
<feature type="modified residue" description="Phosphoserine; by host" evidence="1">
    <location>
        <position position="98"/>
    </location>
</feature>
<gene>
    <name evidence="1" type="primary">rev</name>
</gene>
<evidence type="ECO:0000255" key="1">
    <source>
        <dbReference type="HAMAP-Rule" id="MF_04077"/>
    </source>
</evidence>
<evidence type="ECO:0000256" key="2">
    <source>
        <dbReference type="SAM" id="MobiDB-lite"/>
    </source>
</evidence>
<name>REV_HV1MN</name>
<organism>
    <name type="scientific">Human immunodeficiency virus type 1 group M subtype B (isolate MN)</name>
    <name type="common">HIV-1</name>
    <dbReference type="NCBI Taxonomy" id="11696"/>
    <lineage>
        <taxon>Viruses</taxon>
        <taxon>Riboviria</taxon>
        <taxon>Pararnavirae</taxon>
        <taxon>Artverviricota</taxon>
        <taxon>Revtraviricetes</taxon>
        <taxon>Ortervirales</taxon>
        <taxon>Retroviridae</taxon>
        <taxon>Orthoretrovirinae</taxon>
        <taxon>Lentivirus</taxon>
        <taxon>Human immunodeficiency virus type 1</taxon>
    </lineage>
</organism>
<accession>P05871</accession>
<comment type="function">
    <text evidence="1">Escorts unspliced or incompletely spliced viral pre-mRNAs (late transcripts) out of the nucleus of infected cells. These pre-mRNAs carry a recognition sequence called Rev responsive element (RRE) located in the env gene, that is not present in fully spliced viral mRNAs (early transcripts). This function is essential since most viral proteins are translated from unspliced or partially spliced pre-mRNAs which cannot exit the nucleus by the pathway used by fully processed cellular mRNAs. Rev itself is translated from a fully spliced mRNA that readily exits the nucleus. Rev's nuclear localization signal (NLS) binds directly to KPNB1/Importin beta-1 without previous binding to KPNA1/Importin alpha-1. KPNB1 binds to the GDP bound form of RAN (Ran-GDP) and targets Rev to the nucleus. In the nucleus, the conversion from Ran-GDP to Ran-GTP dissociates Rev from KPNB1 and allows Rev's binding to the RRE in viral pre-mRNAs. Rev multimerization on the RRE via cooperative assembly exposes its nuclear export signal (NES) to the surface. Rev can then form a complex with XPO1/CRM1 and Ran-GTP, leading to nuclear export of the complex. Conversion from Ran-GTP to Ran-GDP mediates dissociation of the Rev/RRE/XPO1/RAN complex, so that Rev can return to the nucleus for a subsequent round of export. Beside KPNB1, also seems to interact with TNPO1/Transportin-1, RANBP5/IPO5 and IPO7/RANBP7 for nuclear import. The nucleoporin-like HRB/RIP is an essential cofactor that probably indirectly interacts with Rev to release HIV RNAs from the perinuclear region to the cytoplasm.</text>
</comment>
<comment type="subunit">
    <text evidence="1">Homomultimer; when bound to the RRE. Multimeric assembly is essential for activity and may involve XPO1. Binds to human KPNB1, XPO1, TNPO1, RANBP5 and IPO7. Interacts with the viral Integrase. Interacts with human KHDRBS1. Interacts with human NAP1; this interaction decreases Rev multimerization and stimulates its activity. Interacts with human DEAD-box helicases DDX3 and DDX24; these interactions may serve for viral RNA export to the cytoplasm and packaging, respectively. Interacts with human PSIP1; this interaction may inhibit HIV-1 DNA integration by promoting dissociation of the Integrase-LEDGF/p75 complex.</text>
</comment>
<comment type="subcellular location">
    <subcellularLocation>
        <location evidence="1">Host nucleus</location>
        <location evidence="1">Host nucleolus</location>
    </subcellularLocation>
    <subcellularLocation>
        <location evidence="1">Host cytoplasm</location>
    </subcellularLocation>
    <text evidence="1">The presence of both nuclear import and nuclear export signals leads to continuous shuttling between the nucleus and cytoplasm.</text>
</comment>
<comment type="domain">
    <text evidence="1">The RNA-binding motif binds to the RRE, a 240 bp stem-and-loop structure present in incompletely spliced viral pre-mRNAs. This region also contains the NLS which mediates nuclear localization via KPNB1 binding and, when the N-terminal sequence is present, nucleolar targeting. These overlapping functions prevent Rev bound to RRE from undesirable return to the nucleus. When Rev binds the RRE, the NLS becomes masked while the NES remains accessible. The leucine-rich NES mediates binding to human XPO1.</text>
</comment>
<comment type="PTM">
    <text evidence="1">Asymmetrically arginine dimethylated at one site by host PRMT6. Methylation impairs the RNA-binding activity and export of viral RNA from the nucleus to the cytoplasm.</text>
</comment>
<comment type="PTM">
    <text evidence="1">Phosphorylated by protein kinase CK2. Presence of, and maybe binding to the N-terminus of the regulatory beta subunit of CK2 is necessary for CK2-mediated Rev's phosphorylation.</text>
</comment>
<comment type="miscellaneous">
    <text evidence="1">HIV-1 lineages are divided in three main groups, M (for Major), O (for Outlier), and N (for New, or Non-M, Non-O). The vast majority of strains found worldwide belong to the group M. Group O seems to be endemic to and largely confined to Cameroon and neighboring countries in West Central Africa, where these viruses represent a small minority of HIV-1 strains. The group N is represented by a limited number of isolates from Cameroonian persons. The group M is further subdivided in 9 clades or subtypes (A to D, F to H, J and K).</text>
</comment>
<comment type="similarity">
    <text evidence="1">Belongs to the HIV-1 REV protein family.</text>
</comment>
<organismHost>
    <name type="scientific">Homo sapiens</name>
    <name type="common">Human</name>
    <dbReference type="NCBI Taxonomy" id="9606"/>
</organismHost>
<protein>
    <recommendedName>
        <fullName evidence="1">Protein Rev</fullName>
    </recommendedName>
    <alternativeName>
        <fullName evidence="1">ART/TRS</fullName>
    </alternativeName>
    <alternativeName>
        <fullName evidence="1">Anti-repression transactivator</fullName>
    </alternativeName>
    <alternativeName>
        <fullName evidence="1">Regulator of expression of viral proteins</fullName>
    </alternativeName>
</protein>